<name>RS20_CALS4</name>
<reference key="1">
    <citation type="journal article" date="2002" name="Genome Res.">
        <title>A complete sequence of the T. tengcongensis genome.</title>
        <authorList>
            <person name="Bao Q."/>
            <person name="Tian Y."/>
            <person name="Li W."/>
            <person name="Xu Z."/>
            <person name="Xuan Z."/>
            <person name="Hu S."/>
            <person name="Dong W."/>
            <person name="Yang J."/>
            <person name="Chen Y."/>
            <person name="Xue Y."/>
            <person name="Xu Y."/>
            <person name="Lai X."/>
            <person name="Huang L."/>
            <person name="Dong X."/>
            <person name="Ma Y."/>
            <person name="Ling L."/>
            <person name="Tan H."/>
            <person name="Chen R."/>
            <person name="Wang J."/>
            <person name="Yu J."/>
            <person name="Yang H."/>
        </authorList>
    </citation>
    <scope>NUCLEOTIDE SEQUENCE [LARGE SCALE GENOMIC DNA]</scope>
    <source>
        <strain>DSM 15242 / JCM 11007 / NBRC 100824 / MB4</strain>
    </source>
</reference>
<proteinExistence type="inferred from homology"/>
<feature type="chain" id="PRO_0000168051" description="Small ribosomal subunit protein bS20">
    <location>
        <begin position="1"/>
        <end position="105"/>
    </location>
</feature>
<organism>
    <name type="scientific">Caldanaerobacter subterraneus subsp. tengcongensis (strain DSM 15242 / JCM 11007 / NBRC 100824 / MB4)</name>
    <name type="common">Thermoanaerobacter tengcongensis</name>
    <dbReference type="NCBI Taxonomy" id="273068"/>
    <lineage>
        <taxon>Bacteria</taxon>
        <taxon>Bacillati</taxon>
        <taxon>Bacillota</taxon>
        <taxon>Clostridia</taxon>
        <taxon>Thermoanaerobacterales</taxon>
        <taxon>Thermoanaerobacteraceae</taxon>
        <taxon>Caldanaerobacter</taxon>
    </lineage>
</organism>
<sequence>MVKLNSIEEVDLLANTKSAKKRIAIIKKRTLRNKMIKSRVKTFIRRFNESLATKDIEAIKERLRLAVKELDKAVSKGVLHKNTAARKKSKLYAKFNALLKSASNE</sequence>
<accession>Q8RB79</accession>
<keyword id="KW-1185">Reference proteome</keyword>
<keyword id="KW-0687">Ribonucleoprotein</keyword>
<keyword id="KW-0689">Ribosomal protein</keyword>
<keyword id="KW-0694">RNA-binding</keyword>
<keyword id="KW-0699">rRNA-binding</keyword>
<dbReference type="EMBL" id="AE008691">
    <property type="protein sequence ID" value="AAM24199.1"/>
    <property type="molecule type" value="Genomic_DNA"/>
</dbReference>
<dbReference type="SMR" id="Q8RB79"/>
<dbReference type="STRING" id="273068.TTE0943"/>
<dbReference type="KEGG" id="tte:TTE0943"/>
<dbReference type="eggNOG" id="COG0268">
    <property type="taxonomic scope" value="Bacteria"/>
</dbReference>
<dbReference type="HOGENOM" id="CLU_160655_0_0_9"/>
<dbReference type="Proteomes" id="UP000000555">
    <property type="component" value="Chromosome"/>
</dbReference>
<dbReference type="GO" id="GO:0005829">
    <property type="term" value="C:cytosol"/>
    <property type="evidence" value="ECO:0007669"/>
    <property type="project" value="TreeGrafter"/>
</dbReference>
<dbReference type="GO" id="GO:0015935">
    <property type="term" value="C:small ribosomal subunit"/>
    <property type="evidence" value="ECO:0007669"/>
    <property type="project" value="TreeGrafter"/>
</dbReference>
<dbReference type="GO" id="GO:0070181">
    <property type="term" value="F:small ribosomal subunit rRNA binding"/>
    <property type="evidence" value="ECO:0007669"/>
    <property type="project" value="TreeGrafter"/>
</dbReference>
<dbReference type="GO" id="GO:0003735">
    <property type="term" value="F:structural constituent of ribosome"/>
    <property type="evidence" value="ECO:0007669"/>
    <property type="project" value="InterPro"/>
</dbReference>
<dbReference type="GO" id="GO:0006412">
    <property type="term" value="P:translation"/>
    <property type="evidence" value="ECO:0007669"/>
    <property type="project" value="UniProtKB-UniRule"/>
</dbReference>
<dbReference type="FunFam" id="1.20.58.110:FF:000001">
    <property type="entry name" value="30S ribosomal protein S20"/>
    <property type="match status" value="1"/>
</dbReference>
<dbReference type="Gene3D" id="1.20.58.110">
    <property type="entry name" value="Ribosomal protein S20"/>
    <property type="match status" value="1"/>
</dbReference>
<dbReference type="HAMAP" id="MF_00500">
    <property type="entry name" value="Ribosomal_bS20"/>
    <property type="match status" value="1"/>
</dbReference>
<dbReference type="InterPro" id="IPR002583">
    <property type="entry name" value="Ribosomal_bS20"/>
</dbReference>
<dbReference type="InterPro" id="IPR036510">
    <property type="entry name" value="Ribosomal_bS20_sf"/>
</dbReference>
<dbReference type="NCBIfam" id="TIGR00029">
    <property type="entry name" value="S20"/>
    <property type="match status" value="1"/>
</dbReference>
<dbReference type="PANTHER" id="PTHR33398">
    <property type="entry name" value="30S RIBOSOMAL PROTEIN S20"/>
    <property type="match status" value="1"/>
</dbReference>
<dbReference type="PANTHER" id="PTHR33398:SF1">
    <property type="entry name" value="SMALL RIBOSOMAL SUBUNIT PROTEIN BS20C"/>
    <property type="match status" value="1"/>
</dbReference>
<dbReference type="Pfam" id="PF01649">
    <property type="entry name" value="Ribosomal_S20p"/>
    <property type="match status" value="1"/>
</dbReference>
<dbReference type="SUPFAM" id="SSF46992">
    <property type="entry name" value="Ribosomal protein S20"/>
    <property type="match status" value="1"/>
</dbReference>
<gene>
    <name evidence="1" type="primary">rpsT</name>
    <name type="ordered locus">TTE0943</name>
</gene>
<evidence type="ECO:0000255" key="1">
    <source>
        <dbReference type="HAMAP-Rule" id="MF_00500"/>
    </source>
</evidence>
<evidence type="ECO:0000305" key="2"/>
<protein>
    <recommendedName>
        <fullName evidence="1">Small ribosomal subunit protein bS20</fullName>
    </recommendedName>
    <alternativeName>
        <fullName evidence="2">30S ribosomal protein S20</fullName>
    </alternativeName>
</protein>
<comment type="function">
    <text evidence="1">Binds directly to 16S ribosomal RNA.</text>
</comment>
<comment type="similarity">
    <text evidence="1">Belongs to the bacterial ribosomal protein bS20 family.</text>
</comment>